<reference key="1">
    <citation type="submission" date="1997-02" db="EMBL/GenBank/DDBJ databases">
        <title>Molecular cloning and eukaryotic expression of cynomolgus monkey CD4.</title>
        <authorList>
            <person name="Tatsumi M."/>
            <person name="Yabe M."/>
            <person name="Yamada Y.K."/>
        </authorList>
    </citation>
    <scope>NUCLEOTIDE SEQUENCE [MRNA]</scope>
    <source>
        <tissue>Thymocyte</tissue>
    </source>
</reference>
<evidence type="ECO:0000250" key="1"/>
<evidence type="ECO:0000250" key="2">
    <source>
        <dbReference type="UniProtKB" id="P01730"/>
    </source>
</evidence>
<evidence type="ECO:0000255" key="3"/>
<evidence type="ECO:0000255" key="4">
    <source>
        <dbReference type="PROSITE-ProRule" id="PRU00114"/>
    </source>
</evidence>
<evidence type="ECO:0000256" key="5">
    <source>
        <dbReference type="SAM" id="MobiDB-lite"/>
    </source>
</evidence>
<comment type="function">
    <text evidence="2">Integral membrane glycoprotein that plays an essential role in the immune response and serves multiple functions in responses against both external and internal offenses. In T-cells, functions primarily as a coreceptor for MHC class II molecule:peptide complex. The antigens presented by class II peptides are derived from extracellular proteins while class I peptides are derived from cytosolic proteins. Interacts simultaneously with the T-cell receptor (TCR) and the MHC class II presented by antigen presenting cells (APCs). In turn, recruits the Src kinase LCK to the vicinity of the TCR-CD3 complex. LCK then initiates different intracellular signaling pathways by phosphorylating various substrates ultimately leading to lymphokine production, motility, adhesion and activation of T-helper cells. In other cells such as macrophages or NK cells, plays a role in differentiation/activation, cytokine expression and cell migration in a TCR/LCK-independent pathway. Participates in the development of T-helper cells in the thymus and triggers the differentiation of monocytes into functional mature macrophages.</text>
</comment>
<comment type="subunit">
    <text evidence="2">Forms disulfide-linked homodimers at the cell surface. Interacts with LCK. Interacts with PTK2/FAK1. Binds to P4HB/PDI. Interacts with IL16; this interaction induces a CD4-dependent signaling in lymphocytes. Interacts (via Ig-like V-type domain) with MHCII alpha chain (via alpha-2 domain) and beta chain (via beta-2 domain); this interaction increases the affinity of TCR for peptide-MHCII. CD4 oligomerization via Ig-like C2-type 2 and 3 domains appears to be required for stable binding to MHCII and adhesion between T cells and APCs.</text>
</comment>
<comment type="subcellular location">
    <subcellularLocation>
        <location evidence="2">Cell membrane</location>
        <topology evidence="2">Single-pass type I membrane protein</topology>
    </subcellularLocation>
    <text evidence="2">Localizes to lipid rafts.</text>
</comment>
<comment type="domain">
    <text evidence="2">The Ig-like V-type domain mediates the interaction with MHCII.</text>
</comment>
<comment type="PTM">
    <text evidence="2">Palmitoylation and association with LCK contribute to the enrichment of CD4 in lipid rafts.</text>
</comment>
<comment type="PTM">
    <text evidence="2">Phosphorylated by PKC; phosphorylation plays an important role for CD4 internalization.</text>
</comment>
<gene>
    <name type="primary">CD4</name>
</gene>
<dbReference type="EMBL" id="D63349">
    <property type="protein sequence ID" value="BAA09673.1"/>
    <property type="molecule type" value="mRNA"/>
</dbReference>
<dbReference type="SMR" id="P79185"/>
<dbReference type="STRING" id="9541.ENSMFAP00000041028"/>
<dbReference type="GlyCosmos" id="P79185">
    <property type="glycosylation" value="3 sites, No reported glycans"/>
</dbReference>
<dbReference type="eggNOG" id="ENOG502S0W5">
    <property type="taxonomic scope" value="Eukaryota"/>
</dbReference>
<dbReference type="Proteomes" id="UP000233100">
    <property type="component" value="Unplaced"/>
</dbReference>
<dbReference type="GO" id="GO:0009986">
    <property type="term" value="C:cell surface"/>
    <property type="evidence" value="ECO:0007669"/>
    <property type="project" value="UniProtKB-ARBA"/>
</dbReference>
<dbReference type="GO" id="GO:0005886">
    <property type="term" value="C:plasma membrane"/>
    <property type="evidence" value="ECO:0007669"/>
    <property type="project" value="UniProtKB-SubCell"/>
</dbReference>
<dbReference type="GO" id="GO:0015026">
    <property type="term" value="F:coreceptor activity"/>
    <property type="evidence" value="ECO:0007669"/>
    <property type="project" value="InterPro"/>
</dbReference>
<dbReference type="GO" id="GO:0023026">
    <property type="term" value="F:MHC class II protein complex binding"/>
    <property type="evidence" value="ECO:0000250"/>
    <property type="project" value="UniProtKB"/>
</dbReference>
<dbReference type="GO" id="GO:0002250">
    <property type="term" value="P:adaptive immune response"/>
    <property type="evidence" value="ECO:0007669"/>
    <property type="project" value="UniProtKB-KW"/>
</dbReference>
<dbReference type="GO" id="GO:0007155">
    <property type="term" value="P:cell adhesion"/>
    <property type="evidence" value="ECO:0007669"/>
    <property type="project" value="InterPro"/>
</dbReference>
<dbReference type="GO" id="GO:0030217">
    <property type="term" value="P:T cell differentiation"/>
    <property type="evidence" value="ECO:0000250"/>
    <property type="project" value="UniProtKB"/>
</dbReference>
<dbReference type="GO" id="GO:0045058">
    <property type="term" value="P:T cell selection"/>
    <property type="evidence" value="ECO:0000250"/>
    <property type="project" value="UniProtKB"/>
</dbReference>
<dbReference type="CDD" id="cd22570">
    <property type="entry name" value="CD4_CD"/>
    <property type="match status" value="1"/>
</dbReference>
<dbReference type="CDD" id="cd07695">
    <property type="entry name" value="IgV_3_CD4"/>
    <property type="match status" value="1"/>
</dbReference>
<dbReference type="FunFam" id="1.20.5.900:FF:000001">
    <property type="entry name" value="T-cell surface glycoprotein CD4"/>
    <property type="match status" value="1"/>
</dbReference>
<dbReference type="FunFam" id="2.60.40.10:FF:001105">
    <property type="entry name" value="T-cell surface glycoprotein CD4"/>
    <property type="match status" value="1"/>
</dbReference>
<dbReference type="FunFam" id="2.60.40.10:FF:001204">
    <property type="entry name" value="T-cell surface glycoprotein CD4"/>
    <property type="match status" value="1"/>
</dbReference>
<dbReference type="FunFam" id="2.60.40.10:FF:001221">
    <property type="entry name" value="T-cell surface glycoprotein CD4"/>
    <property type="match status" value="1"/>
</dbReference>
<dbReference type="FunFam" id="2.60.40.10:FF:001253">
    <property type="entry name" value="T-cell surface glycoprotein CD4"/>
    <property type="match status" value="1"/>
</dbReference>
<dbReference type="Gene3D" id="2.60.40.10">
    <property type="entry name" value="Immunoglobulins"/>
    <property type="match status" value="4"/>
</dbReference>
<dbReference type="Gene3D" id="1.20.5.900">
    <property type="entry name" value="transmembrane domain of human cd4"/>
    <property type="match status" value="1"/>
</dbReference>
<dbReference type="InterPro" id="IPR000973">
    <property type="entry name" value="CD4"/>
</dbReference>
<dbReference type="InterPro" id="IPR015274">
    <property type="entry name" value="CD4-extracel"/>
</dbReference>
<dbReference type="InterPro" id="IPR007110">
    <property type="entry name" value="Ig-like_dom"/>
</dbReference>
<dbReference type="InterPro" id="IPR036179">
    <property type="entry name" value="Ig-like_dom_sf"/>
</dbReference>
<dbReference type="InterPro" id="IPR013783">
    <property type="entry name" value="Ig-like_fold"/>
</dbReference>
<dbReference type="InterPro" id="IPR008424">
    <property type="entry name" value="Ig_C2-set"/>
</dbReference>
<dbReference type="InterPro" id="IPR003599">
    <property type="entry name" value="Ig_sub"/>
</dbReference>
<dbReference type="InterPro" id="IPR003598">
    <property type="entry name" value="Ig_sub2"/>
</dbReference>
<dbReference type="InterPro" id="IPR013106">
    <property type="entry name" value="Ig_V-set"/>
</dbReference>
<dbReference type="InterPro" id="IPR013151">
    <property type="entry name" value="Immunoglobulin_dom"/>
</dbReference>
<dbReference type="InterPro" id="IPR021963">
    <property type="entry name" value="Tcell_CD4_Cterm"/>
</dbReference>
<dbReference type="PANTHER" id="PTHR11422">
    <property type="entry name" value="T-CELL SURFACE GLYCOPROTEIN CD4"/>
    <property type="match status" value="1"/>
</dbReference>
<dbReference type="PANTHER" id="PTHR11422:SF0">
    <property type="entry name" value="T-CELL SURFACE GLYCOPROTEIN CD4"/>
    <property type="match status" value="1"/>
</dbReference>
<dbReference type="Pfam" id="PF05790">
    <property type="entry name" value="C2-set"/>
    <property type="match status" value="2"/>
</dbReference>
<dbReference type="Pfam" id="PF09191">
    <property type="entry name" value="CD4-extracel"/>
    <property type="match status" value="1"/>
</dbReference>
<dbReference type="Pfam" id="PF00047">
    <property type="entry name" value="ig"/>
    <property type="match status" value="1"/>
</dbReference>
<dbReference type="Pfam" id="PF12104">
    <property type="entry name" value="Tcell_CD4_C"/>
    <property type="match status" value="1"/>
</dbReference>
<dbReference type="PRINTS" id="PR00692">
    <property type="entry name" value="CD4TCANTIGEN"/>
</dbReference>
<dbReference type="SMART" id="SM00409">
    <property type="entry name" value="IG"/>
    <property type="match status" value="3"/>
</dbReference>
<dbReference type="SMART" id="SM00408">
    <property type="entry name" value="IGc2"/>
    <property type="match status" value="2"/>
</dbReference>
<dbReference type="SMART" id="SM00406">
    <property type="entry name" value="IGv"/>
    <property type="match status" value="1"/>
</dbReference>
<dbReference type="SUPFAM" id="SSF48726">
    <property type="entry name" value="Immunoglobulin"/>
    <property type="match status" value="4"/>
</dbReference>
<dbReference type="PROSITE" id="PS50835">
    <property type="entry name" value="IG_LIKE"/>
    <property type="match status" value="1"/>
</dbReference>
<keyword id="KW-1064">Adaptive immunity</keyword>
<keyword id="KW-1003">Cell membrane</keyword>
<keyword id="KW-1015">Disulfide bond</keyword>
<keyword id="KW-0325">Glycoprotein</keyword>
<keyword id="KW-0391">Immunity</keyword>
<keyword id="KW-0393">Immunoglobulin domain</keyword>
<keyword id="KW-0449">Lipoprotein</keyword>
<keyword id="KW-0472">Membrane</keyword>
<keyword id="KW-0564">Palmitate</keyword>
<keyword id="KW-0597">Phosphoprotein</keyword>
<keyword id="KW-1185">Reference proteome</keyword>
<keyword id="KW-0677">Repeat</keyword>
<keyword id="KW-0732">Signal</keyword>
<keyword id="KW-0812">Transmembrane</keyword>
<keyword id="KW-1133">Transmembrane helix</keyword>
<protein>
    <recommendedName>
        <fullName>T-cell surface glycoprotein CD4</fullName>
    </recommendedName>
    <alternativeName>
        <fullName>T-cell surface antigen T4/Leu-3</fullName>
    </alternativeName>
    <cdAntigenName>CD4</cdAntigenName>
</protein>
<organism>
    <name type="scientific">Macaca fascicularis</name>
    <name type="common">Crab-eating macaque</name>
    <name type="synonym">Cynomolgus monkey</name>
    <dbReference type="NCBI Taxonomy" id="9541"/>
    <lineage>
        <taxon>Eukaryota</taxon>
        <taxon>Metazoa</taxon>
        <taxon>Chordata</taxon>
        <taxon>Craniata</taxon>
        <taxon>Vertebrata</taxon>
        <taxon>Euteleostomi</taxon>
        <taxon>Mammalia</taxon>
        <taxon>Eutheria</taxon>
        <taxon>Euarchontoglires</taxon>
        <taxon>Primates</taxon>
        <taxon>Haplorrhini</taxon>
        <taxon>Catarrhini</taxon>
        <taxon>Cercopithecidae</taxon>
        <taxon>Cercopithecinae</taxon>
        <taxon>Macaca</taxon>
    </lineage>
</organism>
<feature type="signal peptide" evidence="1">
    <location>
        <begin position="1"/>
        <end position="25"/>
    </location>
</feature>
<feature type="chain" id="PRO_0000014622" description="T-cell surface glycoprotein CD4">
    <location>
        <begin position="26"/>
        <end position="458"/>
    </location>
</feature>
<feature type="topological domain" description="Extracellular" evidence="3">
    <location>
        <begin position="26"/>
        <end position="396"/>
    </location>
</feature>
<feature type="transmembrane region" description="Helical" evidence="3">
    <location>
        <begin position="397"/>
        <end position="418"/>
    </location>
</feature>
<feature type="topological domain" description="Cytoplasmic" evidence="3">
    <location>
        <begin position="419"/>
        <end position="458"/>
    </location>
</feature>
<feature type="domain" description="Ig-like V-type">
    <location>
        <begin position="26"/>
        <end position="125"/>
    </location>
</feature>
<feature type="domain" description="Ig-like C2-type 1">
    <location>
        <begin position="126"/>
        <end position="203"/>
    </location>
</feature>
<feature type="domain" description="Ig-like C2-type 2">
    <location>
        <begin position="204"/>
        <end position="317"/>
    </location>
</feature>
<feature type="domain" description="Ig-like C2-type 3">
    <location>
        <begin position="318"/>
        <end position="374"/>
    </location>
</feature>
<feature type="region of interest" description="Disordered" evidence="5">
    <location>
        <begin position="144"/>
        <end position="167"/>
    </location>
</feature>
<feature type="modified residue" description="Phosphoserine" evidence="2">
    <location>
        <position position="433"/>
    </location>
</feature>
<feature type="modified residue" description="Phosphoserine" evidence="2">
    <location>
        <position position="440"/>
    </location>
</feature>
<feature type="modified residue" description="Phosphoserine" evidence="2">
    <location>
        <position position="456"/>
    </location>
</feature>
<feature type="lipid moiety-binding region" description="S-palmitoyl cysteine" evidence="1">
    <location>
        <position position="419"/>
    </location>
</feature>
<feature type="lipid moiety-binding region" description="S-palmitoyl cysteine" evidence="1">
    <location>
        <position position="422"/>
    </location>
</feature>
<feature type="glycosylation site" description="N-linked (GlcNAc...) asparagine" evidence="3">
    <location>
        <position position="42"/>
    </location>
</feature>
<feature type="glycosylation site" description="N-linked (GlcNAc...) asparagine" evidence="1">
    <location>
        <position position="296"/>
    </location>
</feature>
<feature type="glycosylation site" description="N-linked (GlcNAc...) asparagine" evidence="1">
    <location>
        <position position="325"/>
    </location>
</feature>
<feature type="disulfide bond" evidence="4">
    <location>
        <begin position="41"/>
        <end position="109"/>
    </location>
</feature>
<feature type="disulfide bond" evidence="4">
    <location>
        <begin position="155"/>
        <end position="184"/>
    </location>
</feature>
<feature type="disulfide bond" evidence="4">
    <location>
        <begin position="328"/>
        <end position="370"/>
    </location>
</feature>
<sequence length="458" mass="50872">MNRGIPFRHLLLVLQLALLPAVTQGKKVVLGKKGDTVELTCNASQKKNTQFHWKNSNQIKILGIQGSFLTKGPSKLSDRADSRKSLWDQGCFSMIIKNLKIEDSDTYICEVENKKEEVELLVFGLTANSDTHLLEGQSLTLTLESPPGSSPSVKCRSPGGKNIQGGRTLSVPQLERQDSGTWTCTVSQDQKTVEFKIDIVVLAFQKASSTVYKKEGEQVEFSFPPAFTLEKLTGSGELWWQAERASSSKSWITFDLKNKEVSVKRVTQDPKLQMGKKLPLHLTLPQALPQYAGSGNLTLALEAKTGKLHQEVNLVVMRATQFQENLTCEVWGPTSPKLTLSLKLENKGTTVSKQAKAVWVLNPEAGMWQCLLSDSGQVLLESNIKVVPTWPTPVQPMALIVLGGVAGLLLFTGLGIFFCVRCRHRRRQAERMSQIKRLLSEKKTCQCPHRFQKTCSPI</sequence>
<name>CD4_MACFA</name>
<proteinExistence type="evidence at transcript level"/>
<accession>P79185</accession>